<gene>
    <name type="primary">HBB</name>
</gene>
<organism>
    <name type="scientific">Eulemur fulvus fulvus</name>
    <name type="common">Brown lemur</name>
    <dbReference type="NCBI Taxonomy" id="40322"/>
    <lineage>
        <taxon>Eukaryota</taxon>
        <taxon>Metazoa</taxon>
        <taxon>Chordata</taxon>
        <taxon>Craniata</taxon>
        <taxon>Vertebrata</taxon>
        <taxon>Euteleostomi</taxon>
        <taxon>Mammalia</taxon>
        <taxon>Eutheria</taxon>
        <taxon>Euarchontoglires</taxon>
        <taxon>Primates</taxon>
        <taxon>Strepsirrhini</taxon>
        <taxon>Lemuriformes</taxon>
        <taxon>Lemuridae</taxon>
        <taxon>Eulemur</taxon>
    </lineage>
</organism>
<protein>
    <recommendedName>
        <fullName>Hemoglobin subunit beta</fullName>
    </recommendedName>
    <alternativeName>
        <fullName>Beta-globin</fullName>
    </alternativeName>
    <alternativeName>
        <fullName>Hemoglobin beta chain</fullName>
    </alternativeName>
</protein>
<name>HBB_EULFU</name>
<feature type="initiator methionine" description="Removed" evidence="3">
    <location>
        <position position="1"/>
    </location>
</feature>
<feature type="chain" id="PRO_0000052987" description="Hemoglobin subunit beta">
    <location>
        <begin position="2"/>
        <end position="147"/>
    </location>
</feature>
<feature type="domain" description="Globin" evidence="2">
    <location>
        <begin position="3"/>
        <end position="147"/>
    </location>
</feature>
<feature type="binding site" description="distal binding residue">
    <location>
        <position position="64"/>
    </location>
    <ligand>
        <name>heme b</name>
        <dbReference type="ChEBI" id="CHEBI:60344"/>
    </ligand>
    <ligandPart>
        <name>Fe</name>
        <dbReference type="ChEBI" id="CHEBI:18248"/>
    </ligandPart>
</feature>
<feature type="binding site" description="proximal binding residue">
    <location>
        <position position="93"/>
    </location>
    <ligand>
        <name>heme b</name>
        <dbReference type="ChEBI" id="CHEBI:60344"/>
    </ligand>
    <ligandPart>
        <name>Fe</name>
        <dbReference type="ChEBI" id="CHEBI:18248"/>
    </ligandPart>
</feature>
<feature type="modified residue" description="Phosphothreonine" evidence="1">
    <location>
        <position position="13"/>
    </location>
</feature>
<feature type="modified residue" description="Phosphoserine" evidence="1">
    <location>
        <position position="45"/>
    </location>
</feature>
<feature type="modified residue" description="N6-acetyllysine" evidence="1">
    <location>
        <position position="60"/>
    </location>
</feature>
<feature type="modified residue" description="N6-acetyllysine" evidence="1">
    <location>
        <position position="83"/>
    </location>
</feature>
<feature type="modified residue" description="S-nitrosocysteine" evidence="1">
    <location>
        <position position="94"/>
    </location>
</feature>
<feature type="modified residue" description="N6-acetyllysine" evidence="1">
    <location>
        <position position="145"/>
    </location>
</feature>
<evidence type="ECO:0000250" key="1">
    <source>
        <dbReference type="UniProtKB" id="P68871"/>
    </source>
</evidence>
<evidence type="ECO:0000255" key="2">
    <source>
        <dbReference type="PROSITE-ProRule" id="PRU00238"/>
    </source>
</evidence>
<evidence type="ECO:0000269" key="3">
    <source>
    </source>
</evidence>
<reference key="1">
    <citation type="journal article" date="1986" name="Mol. Biol. Evol.">
        <title>Nucleotide sequence analysis of the lemur beta-globin gene family: evidence for major rate fluctuations in globin polypeptide evolution.</title>
        <authorList>
            <person name="Harris S."/>
            <person name="Thackeray J.R."/>
            <person name="Jeffreys A.J."/>
            <person name="Weiss M.L."/>
        </authorList>
    </citation>
    <scope>NUCLEOTIDE SEQUENCE [GENOMIC DNA]</scope>
</reference>
<reference key="2">
    <citation type="journal article" date="1979" name="J. Biochem.">
        <title>Amino acid sequences of the alpha and beta chains of adult hemoglobin of the brown lemur, Lemur fulvus fulvus.</title>
        <authorList>
            <person name="Maita T."/>
            <person name="Setoguchi M."/>
            <person name="Matsuda G."/>
            <person name="Goodman M."/>
        </authorList>
    </citation>
    <scope>PROTEIN SEQUENCE OF 2-147</scope>
</reference>
<comment type="function">
    <text>Involved in oxygen transport from the lung to the various peripheral tissues.</text>
</comment>
<comment type="subunit">
    <text>Heterotetramer of two alpha chains and two beta chains.</text>
</comment>
<comment type="tissue specificity">
    <text>Red blood cells.</text>
</comment>
<comment type="similarity">
    <text evidence="2">Belongs to the globin family.</text>
</comment>
<proteinExistence type="evidence at protein level"/>
<dbReference type="EMBL" id="M15734">
    <property type="protein sequence ID" value="AAA36822.1"/>
    <property type="molecule type" value="Genomic_DNA"/>
</dbReference>
<dbReference type="PIR" id="A02370">
    <property type="entry name" value="HBLEF"/>
</dbReference>
<dbReference type="SMR" id="P02053"/>
<dbReference type="GO" id="GO:0072562">
    <property type="term" value="C:blood microparticle"/>
    <property type="evidence" value="ECO:0007669"/>
    <property type="project" value="TreeGrafter"/>
</dbReference>
<dbReference type="GO" id="GO:0031838">
    <property type="term" value="C:haptoglobin-hemoglobin complex"/>
    <property type="evidence" value="ECO:0007669"/>
    <property type="project" value="TreeGrafter"/>
</dbReference>
<dbReference type="GO" id="GO:0005833">
    <property type="term" value="C:hemoglobin complex"/>
    <property type="evidence" value="ECO:0007669"/>
    <property type="project" value="InterPro"/>
</dbReference>
<dbReference type="GO" id="GO:0031720">
    <property type="term" value="F:haptoglobin binding"/>
    <property type="evidence" value="ECO:0007669"/>
    <property type="project" value="TreeGrafter"/>
</dbReference>
<dbReference type="GO" id="GO:0020037">
    <property type="term" value="F:heme binding"/>
    <property type="evidence" value="ECO:0007669"/>
    <property type="project" value="InterPro"/>
</dbReference>
<dbReference type="GO" id="GO:0031721">
    <property type="term" value="F:hemoglobin alpha binding"/>
    <property type="evidence" value="ECO:0007669"/>
    <property type="project" value="TreeGrafter"/>
</dbReference>
<dbReference type="GO" id="GO:0046872">
    <property type="term" value="F:metal ion binding"/>
    <property type="evidence" value="ECO:0007669"/>
    <property type="project" value="UniProtKB-KW"/>
</dbReference>
<dbReference type="GO" id="GO:0043177">
    <property type="term" value="F:organic acid binding"/>
    <property type="evidence" value="ECO:0007669"/>
    <property type="project" value="TreeGrafter"/>
</dbReference>
<dbReference type="GO" id="GO:0019825">
    <property type="term" value="F:oxygen binding"/>
    <property type="evidence" value="ECO:0007669"/>
    <property type="project" value="InterPro"/>
</dbReference>
<dbReference type="GO" id="GO:0005344">
    <property type="term" value="F:oxygen carrier activity"/>
    <property type="evidence" value="ECO:0007669"/>
    <property type="project" value="UniProtKB-KW"/>
</dbReference>
<dbReference type="GO" id="GO:0004601">
    <property type="term" value="F:peroxidase activity"/>
    <property type="evidence" value="ECO:0007669"/>
    <property type="project" value="TreeGrafter"/>
</dbReference>
<dbReference type="GO" id="GO:0042744">
    <property type="term" value="P:hydrogen peroxide catabolic process"/>
    <property type="evidence" value="ECO:0007669"/>
    <property type="project" value="TreeGrafter"/>
</dbReference>
<dbReference type="CDD" id="cd08925">
    <property type="entry name" value="Hb-beta-like"/>
    <property type="match status" value="1"/>
</dbReference>
<dbReference type="FunFam" id="1.10.490.10:FF:000001">
    <property type="entry name" value="Hemoglobin subunit beta"/>
    <property type="match status" value="1"/>
</dbReference>
<dbReference type="Gene3D" id="1.10.490.10">
    <property type="entry name" value="Globins"/>
    <property type="match status" value="1"/>
</dbReference>
<dbReference type="InterPro" id="IPR000971">
    <property type="entry name" value="Globin"/>
</dbReference>
<dbReference type="InterPro" id="IPR009050">
    <property type="entry name" value="Globin-like_sf"/>
</dbReference>
<dbReference type="InterPro" id="IPR012292">
    <property type="entry name" value="Globin/Proto"/>
</dbReference>
<dbReference type="InterPro" id="IPR002337">
    <property type="entry name" value="Hemoglobin_b"/>
</dbReference>
<dbReference type="InterPro" id="IPR050056">
    <property type="entry name" value="Hemoglobin_oxygen_transport"/>
</dbReference>
<dbReference type="PANTHER" id="PTHR11442">
    <property type="entry name" value="HEMOGLOBIN FAMILY MEMBER"/>
    <property type="match status" value="1"/>
</dbReference>
<dbReference type="PANTHER" id="PTHR11442:SF42">
    <property type="entry name" value="HEMOGLOBIN SUBUNIT BETA"/>
    <property type="match status" value="1"/>
</dbReference>
<dbReference type="Pfam" id="PF00042">
    <property type="entry name" value="Globin"/>
    <property type="match status" value="1"/>
</dbReference>
<dbReference type="PRINTS" id="PR00814">
    <property type="entry name" value="BETAHAEM"/>
</dbReference>
<dbReference type="SUPFAM" id="SSF46458">
    <property type="entry name" value="Globin-like"/>
    <property type="match status" value="1"/>
</dbReference>
<dbReference type="PROSITE" id="PS01033">
    <property type="entry name" value="GLOBIN"/>
    <property type="match status" value="1"/>
</dbReference>
<accession>P02053</accession>
<keyword id="KW-0007">Acetylation</keyword>
<keyword id="KW-0903">Direct protein sequencing</keyword>
<keyword id="KW-0349">Heme</keyword>
<keyword id="KW-0408">Iron</keyword>
<keyword id="KW-0479">Metal-binding</keyword>
<keyword id="KW-0561">Oxygen transport</keyword>
<keyword id="KW-0597">Phosphoprotein</keyword>
<keyword id="KW-0702">S-nitrosylation</keyword>
<keyword id="KW-0813">Transport</keyword>
<sequence>MTLLSAEENAHVTSLWGKVDVEKVGGEALGRLLVVYPWTQRFFESFGDLSSPSAVMGNPKVKAHGKKVLSAFSEGLHHLDNLKGTFAQLSELHCDKLHVDPQNFTLLGNVLVVVLAEHFGNAFSPAVQAAFQKVVAGVANALAHKYH</sequence>